<keyword id="KW-0067">ATP-binding</keyword>
<keyword id="KW-0347">Helicase</keyword>
<keyword id="KW-0378">Hydrolase</keyword>
<keyword id="KW-0547">Nucleotide-binding</keyword>
<keyword id="KW-1185">Reference proteome</keyword>
<keyword id="KW-0694">RNA-binding</keyword>
<keyword id="KW-0804">Transcription</keyword>
<keyword id="KW-0805">Transcription regulation</keyword>
<keyword id="KW-0806">Transcription termination</keyword>
<evidence type="ECO:0000255" key="1">
    <source>
        <dbReference type="HAMAP-Rule" id="MF_01884"/>
    </source>
</evidence>
<evidence type="ECO:0000255" key="2">
    <source>
        <dbReference type="PROSITE-ProRule" id="PRU01203"/>
    </source>
</evidence>
<sequence length="419" mass="47069">MNLTELKQKPIAELLEMSDAMGLENMARSRKQDIIFALLKKHAKSGEEISGDGVLEILQDGFGFLRSADSSYLAGPDDIYVSPSQIRRFNLRTGDTIIGKIRPPKEGERYFALLKVDSINFDRPENAKNKILFENLTPLFPNERMKMEAGNGSTEDLTGRVIDLCAPIGKGQRGLIVAPPKAGKTIMLQNIASNITRNNPECHLIVLLIDERPEEVTEMQRTVRGEVVASTFDEPPTRHVQVAEMVIEKAKRLVEHKKDVVILLDSITRLARAYNTVIPSSGKVLTGGVDAHALEKPKRFFGAARNIEEGGSLTILATALVETGSKMDEVIYEEFKGTGNMELPLDRKIAEKRVFPAININRSGTRREELLTSEDELQRMWILRKILHPMDEISAIEFLIDKLKQTKTNDEFFDSMKRK</sequence>
<name>RHO_PSEAE</name>
<proteinExistence type="inferred from homology"/>
<reference key="1">
    <citation type="journal article" date="2000" name="Nature">
        <title>Complete genome sequence of Pseudomonas aeruginosa PAO1, an opportunistic pathogen.</title>
        <authorList>
            <person name="Stover C.K."/>
            <person name="Pham X.-Q.T."/>
            <person name="Erwin A.L."/>
            <person name="Mizoguchi S.D."/>
            <person name="Warrener P."/>
            <person name="Hickey M.J."/>
            <person name="Brinkman F.S.L."/>
            <person name="Hufnagle W.O."/>
            <person name="Kowalik D.J."/>
            <person name="Lagrou M."/>
            <person name="Garber R.L."/>
            <person name="Goltry L."/>
            <person name="Tolentino E."/>
            <person name="Westbrock-Wadman S."/>
            <person name="Yuan Y."/>
            <person name="Brody L.L."/>
            <person name="Coulter S.N."/>
            <person name="Folger K.R."/>
            <person name="Kas A."/>
            <person name="Larbig K."/>
            <person name="Lim R.M."/>
            <person name="Smith K.A."/>
            <person name="Spencer D.H."/>
            <person name="Wong G.K.-S."/>
            <person name="Wu Z."/>
            <person name="Paulsen I.T."/>
            <person name="Reizer J."/>
            <person name="Saier M.H. Jr."/>
            <person name="Hancock R.E.W."/>
            <person name="Lory S."/>
            <person name="Olson M.V."/>
        </authorList>
    </citation>
    <scope>NUCLEOTIDE SEQUENCE [LARGE SCALE GENOMIC DNA]</scope>
    <source>
        <strain>ATCC 15692 / DSM 22644 / CIP 104116 / JCM 14847 / LMG 12228 / 1C / PRS 101 / PAO1</strain>
    </source>
</reference>
<dbReference type="EC" id="3.6.4.-" evidence="1"/>
<dbReference type="EMBL" id="AE004091">
    <property type="protein sequence ID" value="AAG08624.1"/>
    <property type="molecule type" value="Genomic_DNA"/>
</dbReference>
<dbReference type="PIR" id="F82991">
    <property type="entry name" value="F82991"/>
</dbReference>
<dbReference type="RefSeq" id="NP_253926.1">
    <property type="nucleotide sequence ID" value="NC_002516.2"/>
</dbReference>
<dbReference type="RefSeq" id="WP_003096334.1">
    <property type="nucleotide sequence ID" value="NZ_QZGE01000002.1"/>
</dbReference>
<dbReference type="SMR" id="Q9HTV1"/>
<dbReference type="FunCoup" id="Q9HTV1">
    <property type="interactions" value="704"/>
</dbReference>
<dbReference type="STRING" id="208964.PA5239"/>
<dbReference type="PaxDb" id="208964-PA5239"/>
<dbReference type="DNASU" id="880855"/>
<dbReference type="GeneID" id="77223772"/>
<dbReference type="GeneID" id="880855"/>
<dbReference type="KEGG" id="pae:PA5239"/>
<dbReference type="PATRIC" id="fig|208964.12.peg.5490"/>
<dbReference type="PseudoCAP" id="PA5239"/>
<dbReference type="HOGENOM" id="CLU_016377_4_3_6"/>
<dbReference type="InParanoid" id="Q9HTV1"/>
<dbReference type="OrthoDB" id="9805197at2"/>
<dbReference type="PhylomeDB" id="Q9HTV1"/>
<dbReference type="BioCyc" id="PAER208964:G1FZ6-5359-MONOMER"/>
<dbReference type="Proteomes" id="UP000002438">
    <property type="component" value="Chromosome"/>
</dbReference>
<dbReference type="GO" id="GO:0005829">
    <property type="term" value="C:cytosol"/>
    <property type="evidence" value="ECO:0007669"/>
    <property type="project" value="UniProtKB-ARBA"/>
</dbReference>
<dbReference type="GO" id="GO:0005524">
    <property type="term" value="F:ATP binding"/>
    <property type="evidence" value="ECO:0007669"/>
    <property type="project" value="UniProtKB-UniRule"/>
</dbReference>
<dbReference type="GO" id="GO:0016887">
    <property type="term" value="F:ATP hydrolysis activity"/>
    <property type="evidence" value="ECO:0007669"/>
    <property type="project" value="InterPro"/>
</dbReference>
<dbReference type="GO" id="GO:0008186">
    <property type="term" value="F:ATP-dependent activity, acting on RNA"/>
    <property type="evidence" value="ECO:0007669"/>
    <property type="project" value="InterPro"/>
</dbReference>
<dbReference type="GO" id="GO:0004386">
    <property type="term" value="F:helicase activity"/>
    <property type="evidence" value="ECO:0007669"/>
    <property type="project" value="UniProtKB-UniRule"/>
</dbReference>
<dbReference type="GO" id="GO:0003723">
    <property type="term" value="F:RNA binding"/>
    <property type="evidence" value="ECO:0007669"/>
    <property type="project" value="UniProtKB-UniRule"/>
</dbReference>
<dbReference type="GO" id="GO:0006353">
    <property type="term" value="P:DNA-templated transcription termination"/>
    <property type="evidence" value="ECO:0000318"/>
    <property type="project" value="GO_Central"/>
</dbReference>
<dbReference type="CDD" id="cd04459">
    <property type="entry name" value="Rho_CSD"/>
    <property type="match status" value="1"/>
</dbReference>
<dbReference type="CDD" id="cd01128">
    <property type="entry name" value="rho_factor_C"/>
    <property type="match status" value="1"/>
</dbReference>
<dbReference type="FunFam" id="2.40.50.140:FF:000010">
    <property type="entry name" value="Transcription termination factor Rho"/>
    <property type="match status" value="1"/>
</dbReference>
<dbReference type="FunFam" id="3.40.50.300:FF:000072">
    <property type="entry name" value="Transcription termination factor Rho"/>
    <property type="match status" value="1"/>
</dbReference>
<dbReference type="Gene3D" id="1.10.720.10">
    <property type="match status" value="1"/>
</dbReference>
<dbReference type="Gene3D" id="2.40.50.140">
    <property type="entry name" value="Nucleic acid-binding proteins"/>
    <property type="match status" value="1"/>
</dbReference>
<dbReference type="Gene3D" id="3.40.50.300">
    <property type="entry name" value="P-loop containing nucleotide triphosphate hydrolases"/>
    <property type="match status" value="1"/>
</dbReference>
<dbReference type="HAMAP" id="MF_01884">
    <property type="entry name" value="Rho"/>
    <property type="match status" value="1"/>
</dbReference>
<dbReference type="InterPro" id="IPR003593">
    <property type="entry name" value="AAA+_ATPase"/>
</dbReference>
<dbReference type="InterPro" id="IPR000194">
    <property type="entry name" value="ATPase_F1/V1/A1_a/bsu_nucl-bd"/>
</dbReference>
<dbReference type="InterPro" id="IPR011129">
    <property type="entry name" value="CSD"/>
</dbReference>
<dbReference type="InterPro" id="IPR012340">
    <property type="entry name" value="NA-bd_OB-fold"/>
</dbReference>
<dbReference type="InterPro" id="IPR027417">
    <property type="entry name" value="P-loop_NTPase"/>
</dbReference>
<dbReference type="InterPro" id="IPR011112">
    <property type="entry name" value="Rho-like_N"/>
</dbReference>
<dbReference type="InterPro" id="IPR041703">
    <property type="entry name" value="Rho_factor_ATP-bd"/>
</dbReference>
<dbReference type="InterPro" id="IPR036269">
    <property type="entry name" value="Rho_N_sf"/>
</dbReference>
<dbReference type="InterPro" id="IPR011113">
    <property type="entry name" value="Rho_RNA-bd"/>
</dbReference>
<dbReference type="InterPro" id="IPR004665">
    <property type="entry name" value="Term_rho"/>
</dbReference>
<dbReference type="NCBIfam" id="NF006886">
    <property type="entry name" value="PRK09376.1"/>
    <property type="match status" value="1"/>
</dbReference>
<dbReference type="NCBIfam" id="TIGR00767">
    <property type="entry name" value="rho"/>
    <property type="match status" value="1"/>
</dbReference>
<dbReference type="PANTHER" id="PTHR46425">
    <property type="entry name" value="TRANSCRIPTION TERMINATION FACTOR RHO"/>
    <property type="match status" value="1"/>
</dbReference>
<dbReference type="PANTHER" id="PTHR46425:SF1">
    <property type="entry name" value="TRANSCRIPTION TERMINATION FACTOR RHO"/>
    <property type="match status" value="1"/>
</dbReference>
<dbReference type="Pfam" id="PF00006">
    <property type="entry name" value="ATP-synt_ab"/>
    <property type="match status" value="1"/>
</dbReference>
<dbReference type="Pfam" id="PF07498">
    <property type="entry name" value="Rho_N"/>
    <property type="match status" value="1"/>
</dbReference>
<dbReference type="Pfam" id="PF07497">
    <property type="entry name" value="Rho_RNA_bind"/>
    <property type="match status" value="1"/>
</dbReference>
<dbReference type="SMART" id="SM00382">
    <property type="entry name" value="AAA"/>
    <property type="match status" value="1"/>
</dbReference>
<dbReference type="SMART" id="SM00357">
    <property type="entry name" value="CSP"/>
    <property type="match status" value="1"/>
</dbReference>
<dbReference type="SMART" id="SM00959">
    <property type="entry name" value="Rho_N"/>
    <property type="match status" value="1"/>
</dbReference>
<dbReference type="SUPFAM" id="SSF50249">
    <property type="entry name" value="Nucleic acid-binding proteins"/>
    <property type="match status" value="1"/>
</dbReference>
<dbReference type="SUPFAM" id="SSF52540">
    <property type="entry name" value="P-loop containing nucleoside triphosphate hydrolases"/>
    <property type="match status" value="1"/>
</dbReference>
<dbReference type="SUPFAM" id="SSF68912">
    <property type="entry name" value="Rho N-terminal domain-like"/>
    <property type="match status" value="1"/>
</dbReference>
<dbReference type="PROSITE" id="PS51856">
    <property type="entry name" value="RHO_RNA_BD"/>
    <property type="match status" value="1"/>
</dbReference>
<comment type="function">
    <text evidence="1">Facilitates transcription termination by a mechanism that involves Rho binding to the nascent RNA, activation of Rho's RNA-dependent ATPase activity, and release of the mRNA from the DNA template.</text>
</comment>
<comment type="subunit">
    <text evidence="1">Homohexamer. The homohexamer assembles into an open ring structure.</text>
</comment>
<comment type="similarity">
    <text evidence="1">Belongs to the Rho family.</text>
</comment>
<feature type="chain" id="PRO_0000287808" description="Transcription termination factor Rho">
    <location>
        <begin position="1"/>
        <end position="419"/>
    </location>
</feature>
<feature type="domain" description="Rho RNA-BD" evidence="2">
    <location>
        <begin position="48"/>
        <end position="123"/>
    </location>
</feature>
<feature type="region of interest" description="RNA-binding 1" evidence="1">
    <location>
        <begin position="61"/>
        <end position="66"/>
    </location>
</feature>
<feature type="region of interest" description="RNA-binding 1" evidence="1">
    <location>
        <begin position="78"/>
        <end position="80"/>
    </location>
</feature>
<feature type="region of interest" description="RNA-binding 1" evidence="1">
    <location>
        <begin position="108"/>
        <end position="110"/>
    </location>
</feature>
<feature type="region of interest" description="RNA-binding 2" evidence="1">
    <location>
        <begin position="284"/>
        <end position="288"/>
    </location>
</feature>
<feature type="binding site" evidence="1">
    <location>
        <begin position="169"/>
        <end position="174"/>
    </location>
    <ligand>
        <name>ATP</name>
        <dbReference type="ChEBI" id="CHEBI:30616"/>
    </ligand>
</feature>
<feature type="binding site" evidence="1">
    <location>
        <begin position="181"/>
        <end position="186"/>
    </location>
    <ligand>
        <name>ATP</name>
        <dbReference type="ChEBI" id="CHEBI:30616"/>
    </ligand>
</feature>
<feature type="binding site" evidence="1">
    <location>
        <position position="212"/>
    </location>
    <ligand>
        <name>ATP</name>
        <dbReference type="ChEBI" id="CHEBI:30616"/>
    </ligand>
</feature>
<feature type="site" description="RNA-binding 2" evidence="1">
    <location>
        <position position="326"/>
    </location>
</feature>
<accession>Q9HTV1</accession>
<organism>
    <name type="scientific">Pseudomonas aeruginosa (strain ATCC 15692 / DSM 22644 / CIP 104116 / JCM 14847 / LMG 12228 / 1C / PRS 101 / PAO1)</name>
    <dbReference type="NCBI Taxonomy" id="208964"/>
    <lineage>
        <taxon>Bacteria</taxon>
        <taxon>Pseudomonadati</taxon>
        <taxon>Pseudomonadota</taxon>
        <taxon>Gammaproteobacteria</taxon>
        <taxon>Pseudomonadales</taxon>
        <taxon>Pseudomonadaceae</taxon>
        <taxon>Pseudomonas</taxon>
    </lineage>
</organism>
<protein>
    <recommendedName>
        <fullName evidence="1">Transcription termination factor Rho</fullName>
        <ecNumber evidence="1">3.6.4.-</ecNumber>
    </recommendedName>
    <alternativeName>
        <fullName evidence="1">ATP-dependent helicase Rho</fullName>
    </alternativeName>
</protein>
<gene>
    <name evidence="1" type="primary">rho</name>
    <name type="ordered locus">PA5239</name>
</gene>